<dbReference type="EC" id="1.8.4.11" evidence="1"/>
<dbReference type="EMBL" id="CP000488">
    <property type="protein sequence ID" value="ABL02381.1"/>
    <property type="molecule type" value="Genomic_DNA"/>
</dbReference>
<dbReference type="RefSeq" id="WP_011738006.1">
    <property type="nucleotide sequence ID" value="NC_008610.1"/>
</dbReference>
<dbReference type="SMR" id="A1AWS4"/>
<dbReference type="STRING" id="413404.Rmag_0636"/>
<dbReference type="KEGG" id="rma:Rmag_0636"/>
<dbReference type="eggNOG" id="COG0225">
    <property type="taxonomic scope" value="Bacteria"/>
</dbReference>
<dbReference type="HOGENOM" id="CLU_031040_10_0_6"/>
<dbReference type="OrthoDB" id="4174719at2"/>
<dbReference type="Proteomes" id="UP000002587">
    <property type="component" value="Chromosome"/>
</dbReference>
<dbReference type="GO" id="GO:0033744">
    <property type="term" value="F:L-methionine:thioredoxin-disulfide S-oxidoreductase activity"/>
    <property type="evidence" value="ECO:0007669"/>
    <property type="project" value="RHEA"/>
</dbReference>
<dbReference type="GO" id="GO:0008113">
    <property type="term" value="F:peptide-methionine (S)-S-oxide reductase activity"/>
    <property type="evidence" value="ECO:0007669"/>
    <property type="project" value="UniProtKB-UniRule"/>
</dbReference>
<dbReference type="GO" id="GO:0036211">
    <property type="term" value="P:protein modification process"/>
    <property type="evidence" value="ECO:0007669"/>
    <property type="project" value="UniProtKB-UniRule"/>
</dbReference>
<dbReference type="Gene3D" id="3.30.1060.10">
    <property type="entry name" value="Peptide methionine sulphoxide reductase MsrA"/>
    <property type="match status" value="1"/>
</dbReference>
<dbReference type="HAMAP" id="MF_01401">
    <property type="entry name" value="MsrA"/>
    <property type="match status" value="1"/>
</dbReference>
<dbReference type="InterPro" id="IPR002569">
    <property type="entry name" value="Met_Sox_Rdtase_MsrA_dom"/>
</dbReference>
<dbReference type="InterPro" id="IPR036509">
    <property type="entry name" value="Met_Sox_Rdtase_MsrA_sf"/>
</dbReference>
<dbReference type="NCBIfam" id="TIGR00401">
    <property type="entry name" value="msrA"/>
    <property type="match status" value="1"/>
</dbReference>
<dbReference type="PANTHER" id="PTHR43774">
    <property type="entry name" value="PEPTIDE METHIONINE SULFOXIDE REDUCTASE"/>
    <property type="match status" value="1"/>
</dbReference>
<dbReference type="PANTHER" id="PTHR43774:SF1">
    <property type="entry name" value="PEPTIDE METHIONINE SULFOXIDE REDUCTASE MSRA 2"/>
    <property type="match status" value="1"/>
</dbReference>
<dbReference type="Pfam" id="PF01625">
    <property type="entry name" value="PMSR"/>
    <property type="match status" value="1"/>
</dbReference>
<dbReference type="SUPFAM" id="SSF55068">
    <property type="entry name" value="Peptide methionine sulfoxide reductase"/>
    <property type="match status" value="1"/>
</dbReference>
<accession>A1AWS4</accession>
<organism>
    <name type="scientific">Ruthia magnifica subsp. Calyptogena magnifica</name>
    <dbReference type="NCBI Taxonomy" id="413404"/>
    <lineage>
        <taxon>Bacteria</taxon>
        <taxon>Pseudomonadati</taxon>
        <taxon>Pseudomonadota</taxon>
        <taxon>Gammaproteobacteria</taxon>
        <taxon>Candidatus Pseudothioglobaceae</taxon>
        <taxon>Candidatus Ruthturnera</taxon>
    </lineage>
</organism>
<proteinExistence type="inferred from homology"/>
<feature type="chain" id="PRO_1000073502" description="Peptide methionine sulfoxide reductase MsrA">
    <location>
        <begin position="1"/>
        <end position="163"/>
    </location>
</feature>
<feature type="active site" evidence="1">
    <location>
        <position position="10"/>
    </location>
</feature>
<protein>
    <recommendedName>
        <fullName evidence="1">Peptide methionine sulfoxide reductase MsrA</fullName>
        <shortName evidence="1">Protein-methionine-S-oxide reductase</shortName>
        <ecNumber evidence="1">1.8.4.11</ecNumber>
    </recommendedName>
    <alternativeName>
        <fullName evidence="1">Peptide-methionine (S)-S-oxide reductase</fullName>
        <shortName evidence="1">Peptide Met(O) reductase</shortName>
    </alternativeName>
</protein>
<reference key="1">
    <citation type="journal article" date="2007" name="Science">
        <title>The Calyptogena magnifica chemoautotrophic symbiont genome.</title>
        <authorList>
            <person name="Newton I.L.G."/>
            <person name="Woyke T."/>
            <person name="Auchtung T.A."/>
            <person name="Dilly G.F."/>
            <person name="Dutton R.J."/>
            <person name="Fisher M.C."/>
            <person name="Fontanez K.M."/>
            <person name="Lau E."/>
            <person name="Stewart F.J."/>
            <person name="Richardson P.M."/>
            <person name="Barry K.W."/>
            <person name="Saunders E."/>
            <person name="Detter J.C."/>
            <person name="Wu D."/>
            <person name="Eisen J.A."/>
            <person name="Cavanaugh C.M."/>
        </authorList>
    </citation>
    <scope>NUCLEOTIDE SEQUENCE [LARGE SCALE GENOMIC DNA]</scope>
</reference>
<comment type="function">
    <text evidence="1">Has an important function as a repair enzyme for proteins that have been inactivated by oxidation. Catalyzes the reversible oxidation-reduction of methionine sulfoxide in proteins to methionine.</text>
</comment>
<comment type="catalytic activity">
    <reaction evidence="1">
        <text>L-methionyl-[protein] + [thioredoxin]-disulfide + H2O = L-methionyl-(S)-S-oxide-[protein] + [thioredoxin]-dithiol</text>
        <dbReference type="Rhea" id="RHEA:14217"/>
        <dbReference type="Rhea" id="RHEA-COMP:10698"/>
        <dbReference type="Rhea" id="RHEA-COMP:10700"/>
        <dbReference type="Rhea" id="RHEA-COMP:12313"/>
        <dbReference type="Rhea" id="RHEA-COMP:12315"/>
        <dbReference type="ChEBI" id="CHEBI:15377"/>
        <dbReference type="ChEBI" id="CHEBI:16044"/>
        <dbReference type="ChEBI" id="CHEBI:29950"/>
        <dbReference type="ChEBI" id="CHEBI:44120"/>
        <dbReference type="ChEBI" id="CHEBI:50058"/>
        <dbReference type="EC" id="1.8.4.11"/>
    </reaction>
</comment>
<comment type="catalytic activity">
    <reaction evidence="1">
        <text>[thioredoxin]-disulfide + L-methionine + H2O = L-methionine (S)-S-oxide + [thioredoxin]-dithiol</text>
        <dbReference type="Rhea" id="RHEA:19993"/>
        <dbReference type="Rhea" id="RHEA-COMP:10698"/>
        <dbReference type="Rhea" id="RHEA-COMP:10700"/>
        <dbReference type="ChEBI" id="CHEBI:15377"/>
        <dbReference type="ChEBI" id="CHEBI:29950"/>
        <dbReference type="ChEBI" id="CHEBI:50058"/>
        <dbReference type="ChEBI" id="CHEBI:57844"/>
        <dbReference type="ChEBI" id="CHEBI:58772"/>
        <dbReference type="EC" id="1.8.4.11"/>
    </reaction>
</comment>
<comment type="similarity">
    <text evidence="1">Belongs to the MsrA Met sulfoxide reductase family.</text>
</comment>
<keyword id="KW-0560">Oxidoreductase</keyword>
<sequence>MQITYFAGGCFWCVEAIFQRIEGVVKLTSGYCNGNTVDPTYQDICTGTTGHAEVVKVEFYELKVSFKTLLNIFFEIHNPTTKNQQGNDRGTQYRSAIFYTNDEQQSQAIDMVNQMSDKIVTQIIKLDVFYPAENYHQNYFNNNSSQPYCQMLIAPKLNKYFNQ</sequence>
<gene>
    <name evidence="1" type="primary">msrA</name>
    <name type="ordered locus">Rmag_0636</name>
</gene>
<name>MSRA_RUTMC</name>
<evidence type="ECO:0000255" key="1">
    <source>
        <dbReference type="HAMAP-Rule" id="MF_01401"/>
    </source>
</evidence>